<reference key="1">
    <citation type="journal article" date="2007" name="Science">
        <title>The Fusarium graminearum genome reveals a link between localized polymorphism and pathogen specialization.</title>
        <authorList>
            <person name="Cuomo C.A."/>
            <person name="Gueldener U."/>
            <person name="Xu J.-R."/>
            <person name="Trail F."/>
            <person name="Turgeon B.G."/>
            <person name="Di Pietro A."/>
            <person name="Walton J.D."/>
            <person name="Ma L.-J."/>
            <person name="Baker S.E."/>
            <person name="Rep M."/>
            <person name="Adam G."/>
            <person name="Antoniw J."/>
            <person name="Baldwin T."/>
            <person name="Calvo S.E."/>
            <person name="Chang Y.-L."/>
            <person name="DeCaprio D."/>
            <person name="Gale L.R."/>
            <person name="Gnerre S."/>
            <person name="Goswami R.S."/>
            <person name="Hammond-Kosack K."/>
            <person name="Harris L.J."/>
            <person name="Hilburn K."/>
            <person name="Kennell J.C."/>
            <person name="Kroken S."/>
            <person name="Magnuson J.K."/>
            <person name="Mannhaupt G."/>
            <person name="Mauceli E.W."/>
            <person name="Mewes H.-W."/>
            <person name="Mitterbauer R."/>
            <person name="Muehlbauer G."/>
            <person name="Muensterkoetter M."/>
            <person name="Nelson D."/>
            <person name="O'Donnell K."/>
            <person name="Ouellet T."/>
            <person name="Qi W."/>
            <person name="Quesneville H."/>
            <person name="Roncero M.I.G."/>
            <person name="Seong K.-Y."/>
            <person name="Tetko I.V."/>
            <person name="Urban M."/>
            <person name="Waalwijk C."/>
            <person name="Ward T.J."/>
            <person name="Yao J."/>
            <person name="Birren B.W."/>
            <person name="Kistler H.C."/>
        </authorList>
    </citation>
    <scope>NUCLEOTIDE SEQUENCE [LARGE SCALE GENOMIC DNA]</scope>
    <source>
        <strain>ATCC MYA-4620 / CBS 123657 / FGSC 9075 / NRRL 31084 / PH-1</strain>
    </source>
</reference>
<reference key="2">
    <citation type="journal article" date="2010" name="Nature">
        <title>Comparative genomics reveals mobile pathogenicity chromosomes in Fusarium.</title>
        <authorList>
            <person name="Ma L.-J."/>
            <person name="van der Does H.C."/>
            <person name="Borkovich K.A."/>
            <person name="Coleman J.J."/>
            <person name="Daboussi M.-J."/>
            <person name="Di Pietro A."/>
            <person name="Dufresne M."/>
            <person name="Freitag M."/>
            <person name="Grabherr M."/>
            <person name="Henrissat B."/>
            <person name="Houterman P.M."/>
            <person name="Kang S."/>
            <person name="Shim W.-B."/>
            <person name="Woloshuk C."/>
            <person name="Xie X."/>
            <person name="Xu J.-R."/>
            <person name="Antoniw J."/>
            <person name="Baker S.E."/>
            <person name="Bluhm B.H."/>
            <person name="Breakspear A."/>
            <person name="Brown D.W."/>
            <person name="Butchko R.A.E."/>
            <person name="Chapman S."/>
            <person name="Coulson R."/>
            <person name="Coutinho P.M."/>
            <person name="Danchin E.G.J."/>
            <person name="Diener A."/>
            <person name="Gale L.R."/>
            <person name="Gardiner D.M."/>
            <person name="Goff S."/>
            <person name="Hammond-Kosack K.E."/>
            <person name="Hilburn K."/>
            <person name="Hua-Van A."/>
            <person name="Jonkers W."/>
            <person name="Kazan K."/>
            <person name="Kodira C.D."/>
            <person name="Koehrsen M."/>
            <person name="Kumar L."/>
            <person name="Lee Y.-H."/>
            <person name="Li L."/>
            <person name="Manners J.M."/>
            <person name="Miranda-Saavedra D."/>
            <person name="Mukherjee M."/>
            <person name="Park G."/>
            <person name="Park J."/>
            <person name="Park S.-Y."/>
            <person name="Proctor R.H."/>
            <person name="Regev A."/>
            <person name="Ruiz-Roldan M.C."/>
            <person name="Sain D."/>
            <person name="Sakthikumar S."/>
            <person name="Sykes S."/>
            <person name="Schwartz D.C."/>
            <person name="Turgeon B.G."/>
            <person name="Wapinski I."/>
            <person name="Yoder O."/>
            <person name="Young S."/>
            <person name="Zeng Q."/>
            <person name="Zhou S."/>
            <person name="Galagan J."/>
            <person name="Cuomo C.A."/>
            <person name="Kistler H.C."/>
            <person name="Rep M."/>
        </authorList>
    </citation>
    <scope>GENOME REANNOTATION</scope>
    <source>
        <strain>ATCC MYA-4620 / CBS 123657 / FGSC 9075 / NRRL 31084 / PH-1</strain>
    </source>
</reference>
<reference key="3">
    <citation type="journal article" date="2015" name="BMC Genomics">
        <title>The completed genome sequence of the pathogenic ascomycete fungus Fusarium graminearum.</title>
        <authorList>
            <person name="King R."/>
            <person name="Urban M."/>
            <person name="Hammond-Kosack M.C.U."/>
            <person name="Hassani-Pak K."/>
            <person name="Hammond-Kosack K.E."/>
        </authorList>
    </citation>
    <scope>GENOME REANNOTATION</scope>
    <source>
        <strain>ATCC MYA-4620 / CBS 123657 / FGSC 9075 / NRRL 31084 / PH-1</strain>
    </source>
</reference>
<protein>
    <recommendedName>
        <fullName>Histone acetyltransferase type B subunit 2</fullName>
    </recommendedName>
</protein>
<evidence type="ECO:0000250" key="1"/>
<evidence type="ECO:0000250" key="2">
    <source>
        <dbReference type="UniProtKB" id="P39984"/>
    </source>
</evidence>
<evidence type="ECO:0000305" key="3"/>
<dbReference type="EMBL" id="DS231666">
    <property type="protein sequence ID" value="ESU12943.1"/>
    <property type="status" value="ALT_SEQ"/>
    <property type="molecule type" value="Genomic_DNA"/>
</dbReference>
<dbReference type="EMBL" id="HG970335">
    <property type="protein sequence ID" value="CEF83605.1"/>
    <property type="molecule type" value="Genomic_DNA"/>
</dbReference>
<dbReference type="RefSeq" id="XP_011326450.1">
    <property type="nucleotide sequence ID" value="XM_011328148.1"/>
</dbReference>
<dbReference type="SMR" id="Q4I7L0"/>
<dbReference type="FunCoup" id="Q4I7L0">
    <property type="interactions" value="1074"/>
</dbReference>
<dbReference type="STRING" id="229533.Q4I7L0"/>
<dbReference type="GeneID" id="23553913"/>
<dbReference type="KEGG" id="fgr:FGSG_06798"/>
<dbReference type="VEuPathDB" id="FungiDB:FGRAMPH1_01G23213"/>
<dbReference type="eggNOG" id="KOG0264">
    <property type="taxonomic scope" value="Eukaryota"/>
</dbReference>
<dbReference type="HOGENOM" id="CLU_020445_3_1_1"/>
<dbReference type="InParanoid" id="Q4I7L0"/>
<dbReference type="OrthoDB" id="2719at110618"/>
<dbReference type="Proteomes" id="UP000070720">
    <property type="component" value="Chromosome 4"/>
</dbReference>
<dbReference type="GO" id="GO:0005737">
    <property type="term" value="C:cytoplasm"/>
    <property type="evidence" value="ECO:0007669"/>
    <property type="project" value="UniProtKB-SubCell"/>
</dbReference>
<dbReference type="GO" id="GO:0005634">
    <property type="term" value="C:nucleus"/>
    <property type="evidence" value="ECO:0007669"/>
    <property type="project" value="UniProtKB-SubCell"/>
</dbReference>
<dbReference type="GO" id="GO:0006325">
    <property type="term" value="P:chromatin organization"/>
    <property type="evidence" value="ECO:0007669"/>
    <property type="project" value="UniProtKB-KW"/>
</dbReference>
<dbReference type="CDD" id="cd00200">
    <property type="entry name" value="WD40"/>
    <property type="match status" value="1"/>
</dbReference>
<dbReference type="Gene3D" id="2.130.10.10">
    <property type="entry name" value="YVTN repeat-like/Quinoprotein amine dehydrogenase"/>
    <property type="match status" value="1"/>
</dbReference>
<dbReference type="InterPro" id="IPR020472">
    <property type="entry name" value="G-protein_beta_WD-40_rep"/>
</dbReference>
<dbReference type="InterPro" id="IPR022052">
    <property type="entry name" value="Histone-bd_RBBP4-like_N"/>
</dbReference>
<dbReference type="InterPro" id="IPR015943">
    <property type="entry name" value="WD40/YVTN_repeat-like_dom_sf"/>
</dbReference>
<dbReference type="InterPro" id="IPR019775">
    <property type="entry name" value="WD40_repeat_CS"/>
</dbReference>
<dbReference type="InterPro" id="IPR036322">
    <property type="entry name" value="WD40_repeat_dom_sf"/>
</dbReference>
<dbReference type="InterPro" id="IPR001680">
    <property type="entry name" value="WD40_rpt"/>
</dbReference>
<dbReference type="InterPro" id="IPR050459">
    <property type="entry name" value="WD_repeat_RBAP46/RBAP48/MSI1"/>
</dbReference>
<dbReference type="PANTHER" id="PTHR22850">
    <property type="entry name" value="WD40 REPEAT FAMILY"/>
    <property type="match status" value="1"/>
</dbReference>
<dbReference type="Pfam" id="PF12265">
    <property type="entry name" value="CAF1C_H4-bd"/>
    <property type="match status" value="1"/>
</dbReference>
<dbReference type="Pfam" id="PF00400">
    <property type="entry name" value="WD40"/>
    <property type="match status" value="5"/>
</dbReference>
<dbReference type="PRINTS" id="PR00320">
    <property type="entry name" value="GPROTEINBRPT"/>
</dbReference>
<dbReference type="SMART" id="SM00320">
    <property type="entry name" value="WD40"/>
    <property type="match status" value="6"/>
</dbReference>
<dbReference type="SUPFAM" id="SSF50978">
    <property type="entry name" value="WD40 repeat-like"/>
    <property type="match status" value="1"/>
</dbReference>
<dbReference type="PROSITE" id="PS00678">
    <property type="entry name" value="WD_REPEATS_1"/>
    <property type="match status" value="3"/>
</dbReference>
<dbReference type="PROSITE" id="PS50082">
    <property type="entry name" value="WD_REPEATS_2"/>
    <property type="match status" value="4"/>
</dbReference>
<dbReference type="PROSITE" id="PS50294">
    <property type="entry name" value="WD_REPEATS_REGION"/>
    <property type="match status" value="1"/>
</dbReference>
<proteinExistence type="inferred from homology"/>
<keyword id="KW-0156">Chromatin regulator</keyword>
<keyword id="KW-0963">Cytoplasm</keyword>
<keyword id="KW-0539">Nucleus</keyword>
<keyword id="KW-1185">Reference proteome</keyword>
<keyword id="KW-0677">Repeat</keyword>
<keyword id="KW-0853">WD repeat</keyword>
<feature type="chain" id="PRO_0000227740" description="Histone acetyltransferase type B subunit 2">
    <location>
        <begin position="1"/>
        <end position="433"/>
    </location>
</feature>
<feature type="repeat" description="WD 1">
    <location>
        <begin position="131"/>
        <end position="171"/>
    </location>
</feature>
<feature type="repeat" description="WD 2">
    <location>
        <begin position="184"/>
        <end position="224"/>
    </location>
</feature>
<feature type="repeat" description="WD 3">
    <location>
        <begin position="234"/>
        <end position="274"/>
    </location>
</feature>
<feature type="repeat" description="WD 4">
    <location>
        <begin position="281"/>
        <end position="321"/>
    </location>
</feature>
<feature type="repeat" description="WD 5">
    <location>
        <begin position="325"/>
        <end position="365"/>
    </location>
</feature>
<feature type="repeat" description="WD 6">
    <location>
        <begin position="382"/>
        <end position="422"/>
    </location>
</feature>
<feature type="region of interest" description="Interaction with the histone H4 N-terminus" evidence="2">
    <location>
        <begin position="367"/>
        <end position="371"/>
    </location>
</feature>
<feature type="site" description="Important for interaction with HAT1" evidence="2">
    <location>
        <position position="298"/>
    </location>
</feature>
<accession>Q4I7L0</accession>
<accession>A0A0E0SAZ2</accession>
<accession>I1RRR3</accession>
<name>HAT2_GIBZE</name>
<organism>
    <name type="scientific">Gibberella zeae (strain ATCC MYA-4620 / CBS 123657 / FGSC 9075 / NRRL 31084 / PH-1)</name>
    <name type="common">Wheat head blight fungus</name>
    <name type="synonym">Fusarium graminearum</name>
    <dbReference type="NCBI Taxonomy" id="229533"/>
    <lineage>
        <taxon>Eukaryota</taxon>
        <taxon>Fungi</taxon>
        <taxon>Dikarya</taxon>
        <taxon>Ascomycota</taxon>
        <taxon>Pezizomycotina</taxon>
        <taxon>Sordariomycetes</taxon>
        <taxon>Hypocreomycetidae</taxon>
        <taxon>Hypocreales</taxon>
        <taxon>Nectriaceae</taxon>
        <taxon>Fusarium</taxon>
    </lineage>
</organism>
<comment type="function">
    <text evidence="2">Regulatory subunit of the histone acetylase B (HAT-B) complex. The complex acetylates 'Lys-12' of histone H4 which is required for telomeric silencing.</text>
</comment>
<comment type="subunit">
    <text evidence="2">Component of the HAT-B complex composed of at least HAT1 and HAT2. The HAT-B complex binds to histone H4 tail.</text>
</comment>
<comment type="subcellular location">
    <subcellularLocation>
        <location evidence="1">Cytoplasm</location>
    </subcellularLocation>
    <subcellularLocation>
        <location evidence="1">Nucleus</location>
    </subcellularLocation>
</comment>
<comment type="similarity">
    <text evidence="3">Belongs to the WD repeat RBAP46/RBAP48/MSI1 family.</text>
</comment>
<comment type="sequence caution" evidence="3">
    <conflict type="erroneous gene model prediction">
        <sequence resource="EMBL-CDS" id="ESU12943"/>
    </conflict>
</comment>
<gene>
    <name type="primary">HAT2</name>
    <name type="ORF">FGRRES_16720</name>
    <name type="ORF">FGSG_06798</name>
</gene>
<sequence>MAPAASADHDMDVDMIHDEEDDQGERLINEEYKTWKKNSPFLTALTWPTLTVQWFPDVKEPEGKNYKIHRLLLGTHTSDESPNYLQIADVQIPKVVAPNPDDYDEERGEIGGYGKSGDVAAIKCDIVQRIEHPGEVNKARYQPQNPDILATLCVDGKILIFDRTKHPLDPTSTGKVNAQIELVGHEAEGFGLNWNPHEEGCLASGSEDTTMRLWDLKTLKADSRILNPSRTYRHHTQIVNDVQYHPISKNFIGSVSDDQTLQIVDIRHSETNKAAVVAKRGHLDAINALAFNPNSEVLVATASADKTIGIWDLRNVKEKVHTLEGHNDAVTSLAWHPTEAGILGSASYDRRIIFWDLSRVGEEQLPDDQDDGPPELLFMHGGHTNHLADFSWNPNEPWLVASAAEDNLLQIWKVAESIVGKDDGDLPIDELDR</sequence>